<keyword id="KW-0520">NAD</keyword>
<keyword id="KW-0521">NADP</keyword>
<keyword id="KW-0560">Oxidoreductase</keyword>
<accession>A0A221J5X1</accession>
<organism>
    <name type="scientific">Nepeta cataria</name>
    <name type="common">Catnip</name>
    <dbReference type="NCBI Taxonomy" id="39347"/>
    <lineage>
        <taxon>Eukaryota</taxon>
        <taxon>Viridiplantae</taxon>
        <taxon>Streptophyta</taxon>
        <taxon>Embryophyta</taxon>
        <taxon>Tracheophyta</taxon>
        <taxon>Spermatophyta</taxon>
        <taxon>Magnoliopsida</taxon>
        <taxon>eudicotyledons</taxon>
        <taxon>Gunneridae</taxon>
        <taxon>Pentapetalae</taxon>
        <taxon>asterids</taxon>
        <taxon>lamiids</taxon>
        <taxon>Lamiales</taxon>
        <taxon>Lamiaceae</taxon>
        <taxon>Nepetoideae</taxon>
        <taxon>Mentheae</taxon>
        <taxon>Nepetinae</taxon>
        <taxon>Nepeta</taxon>
    </lineage>
</organism>
<proteinExistence type="evidence at protein level"/>
<evidence type="ECO:0000250" key="1">
    <source>
        <dbReference type="UniProtKB" id="K7WDL7"/>
    </source>
</evidence>
<evidence type="ECO:0000250" key="2">
    <source>
        <dbReference type="UniProtKB" id="Q9STX2"/>
    </source>
</evidence>
<evidence type="ECO:0000269" key="3">
    <source>
    </source>
</evidence>
<evidence type="ECO:0000303" key="4">
    <source>
    </source>
</evidence>
<evidence type="ECO:0000305" key="5"/>
<evidence type="ECO:0000305" key="6">
    <source>
    </source>
</evidence>
<reference key="1">
    <citation type="journal article" date="2018" name="Phytochemistry">
        <title>Identification of iridoid synthases from Nepeta species: Iridoid cyclization does not determine nepetalactone stereochemistry.</title>
        <authorList>
            <person name="Sherden N.H."/>
            <person name="Lichman B."/>
            <person name="Caputi L."/>
            <person name="Zhao D."/>
            <person name="Kamileen M.O."/>
            <person name="Buell C.R."/>
            <person name="O'Connor S.E."/>
        </authorList>
    </citation>
    <scope>NUCLEOTIDE SEQUENCE [MRNA]</scope>
    <scope>FUNCTION</scope>
    <scope>CATALYTIC ACTIVITY</scope>
    <scope>ACTIVE SITES</scope>
</reference>
<name>ISY2_NEPCA</name>
<sequence>MSMNWWRDGAAKKRMDESSAVKLQQQQCVALIVGVTGLVGNSLAEMLPLSDTPGGPWKVYGVARRPRPSWNEDHPINYISCDVSNTAEVEAKLPPLSDVTHIFYATWTSRSSEEENCEANGKMLKNVLDTMIPNCPNLKHICLQTGRFHYVASVVDWKINGSHDTPLTEDLPRLNTNNFYYTQEDILLEEVKRKEGLTWSVHRPGTIFGFSPYSMMNLVGTLCVYAAICKQEGAVLRFPGCKGAWDGYSDCADADLIAEHYIWAALDPHAKNQSFNVSNGDVFKWKHLWKVLAEQFGVECGGYEYEEGQQVRLQDVMKDKGPVWDKIVRENGLSNTKLEDVGKWWFSDTILWNECRLDSMNKSKEHGFLGFRNSKNCFLYWIHKLKAYKIVPSSTIS</sequence>
<protein>
    <recommendedName>
        <fullName evidence="5">(S)-8-oxocitronellyl enol synthase ISY2</fullName>
        <ecNumber evidence="3">1.3.1.122</ecNumber>
    </recommendedName>
    <alternativeName>
        <fullName evidence="4">Iridoid synthase 2</fullName>
        <shortName evidence="4">NcISY2</shortName>
    </alternativeName>
</protein>
<gene>
    <name evidence="4" type="primary">ISY2</name>
</gene>
<feature type="chain" id="PRO_0000449837" description="(S)-8-oxocitronellyl enol synthase ISY2">
    <location>
        <begin position="1"/>
        <end position="397"/>
    </location>
</feature>
<feature type="active site" evidence="6">
    <location>
        <position position="180"/>
    </location>
</feature>
<feature type="binding site" evidence="1">
    <location>
        <begin position="36"/>
        <end position="38"/>
    </location>
    <ligand>
        <name>NADP(+)</name>
        <dbReference type="ChEBI" id="CHEBI:58349"/>
    </ligand>
</feature>
<feature type="binding site" evidence="1">
    <location>
        <begin position="64"/>
        <end position="65"/>
    </location>
    <ligand>
        <name>NADP(+)</name>
        <dbReference type="ChEBI" id="CHEBI:58349"/>
    </ligand>
</feature>
<feature type="binding site" evidence="1">
    <location>
        <begin position="82"/>
        <end position="83"/>
    </location>
    <ligand>
        <name>NADP(+)</name>
        <dbReference type="ChEBI" id="CHEBI:58349"/>
    </ligand>
</feature>
<feature type="binding site" evidence="1">
    <location>
        <begin position="106"/>
        <end position="107"/>
    </location>
    <ligand>
        <name>NADP(+)</name>
        <dbReference type="ChEBI" id="CHEBI:58349"/>
    </ligand>
</feature>
<feature type="binding site" evidence="1">
    <location>
        <position position="144"/>
    </location>
    <ligand>
        <name>NADP(+)</name>
        <dbReference type="ChEBI" id="CHEBI:58349"/>
    </ligand>
</feature>
<feature type="binding site" evidence="1">
    <location>
        <position position="180"/>
    </location>
    <ligand>
        <name>NADP(+)</name>
        <dbReference type="ChEBI" id="CHEBI:58349"/>
    </ligand>
</feature>
<feature type="binding site" evidence="2">
    <location>
        <position position="207"/>
    </location>
    <ligand>
        <name>NADP(+)</name>
        <dbReference type="ChEBI" id="CHEBI:58349"/>
    </ligand>
</feature>
<feature type="binding site" evidence="1">
    <location>
        <begin position="214"/>
        <end position="216"/>
    </location>
    <ligand>
        <name>NADP(+)</name>
        <dbReference type="ChEBI" id="CHEBI:58349"/>
    </ligand>
</feature>
<dbReference type="EC" id="1.3.1.122" evidence="3"/>
<dbReference type="EMBL" id="KY882234">
    <property type="protein sequence ID" value="ASM62110.1"/>
    <property type="molecule type" value="mRNA"/>
</dbReference>
<dbReference type="SMR" id="A0A221J5X1"/>
<dbReference type="GO" id="GO:0016627">
    <property type="term" value="F:oxidoreductase activity, acting on the CH-CH group of donors"/>
    <property type="evidence" value="ECO:0007669"/>
    <property type="project" value="UniProtKB-ARBA"/>
</dbReference>
<dbReference type="CDD" id="cd08948">
    <property type="entry name" value="5beta-POR_like_SDR_a"/>
    <property type="match status" value="1"/>
</dbReference>
<dbReference type="FunFam" id="3.40.50.720:FF:000808">
    <property type="entry name" value="Iridoid synthase"/>
    <property type="match status" value="1"/>
</dbReference>
<dbReference type="Gene3D" id="3.40.50.720">
    <property type="entry name" value="NAD(P)-binding Rossmann-like Domain"/>
    <property type="match status" value="1"/>
</dbReference>
<dbReference type="InterPro" id="IPR036291">
    <property type="entry name" value="NAD(P)-bd_dom_sf"/>
</dbReference>
<dbReference type="InterPro" id="IPR055222">
    <property type="entry name" value="PRISE-like_Rossmann-fold"/>
</dbReference>
<dbReference type="PANTHER" id="PTHR32487">
    <property type="entry name" value="3-OXO-DELTA(4,5)-STEROID 5-BETA-REDUCTASE"/>
    <property type="match status" value="1"/>
</dbReference>
<dbReference type="PANTHER" id="PTHR32487:SF0">
    <property type="entry name" value="3-OXO-DELTA(4,5)-STEROID 5-BETA-REDUCTASE"/>
    <property type="match status" value="1"/>
</dbReference>
<dbReference type="Pfam" id="PF22917">
    <property type="entry name" value="PRISE"/>
    <property type="match status" value="1"/>
</dbReference>
<dbReference type="SUPFAM" id="SSF51735">
    <property type="entry name" value="NAD(P)-binding Rossmann-fold domains"/>
    <property type="match status" value="1"/>
</dbReference>
<comment type="function">
    <text evidence="3 5">Iridoid synthase that catalyzes the first step in generation of the iridoid ring scaffold using the linear monoterpene (6E)-8-oxogeranial as substrate (PubMed:29091815). Iridoids comprise a large family of distinctive bicyclic monoterpenes that possess a wide range of pharmacological activities, including anticancer, anti-inflammatory, antifungal and antibacterial activities (Probable). Catalyzes the conversion of the linear monoterpene (6E)-8-oxogeranial to (S)-8-oxocitronellyl enol, a precursor of nepetalactones, which are metabolites that are both insect-repellent and have euphoric effect in cats (PubMed:29091815).</text>
</comment>
<comment type="catalytic activity">
    <reaction evidence="3">
        <text>(S)-8-oxocitronellyl enol + NADP(+) = (6E)-8-oxogeranial + NADPH + H(+)</text>
        <dbReference type="Rhea" id="RHEA:62592"/>
        <dbReference type="ChEBI" id="CHEBI:15378"/>
        <dbReference type="ChEBI" id="CHEBI:57783"/>
        <dbReference type="ChEBI" id="CHEBI:58349"/>
        <dbReference type="ChEBI" id="CHEBI:64239"/>
        <dbReference type="ChEBI" id="CHEBI:144481"/>
        <dbReference type="EC" id="1.3.1.122"/>
    </reaction>
    <physiologicalReaction direction="right-to-left" evidence="3">
        <dbReference type="Rhea" id="RHEA:62594"/>
    </physiologicalReaction>
</comment>
<comment type="catalytic activity">
    <reaction evidence="1">
        <text>(S)-8-oxocitronellyl enol + NAD(+) = (6E)-8-oxogeranial + NADH + H(+)</text>
        <dbReference type="Rhea" id="RHEA:62596"/>
        <dbReference type="ChEBI" id="CHEBI:15378"/>
        <dbReference type="ChEBI" id="CHEBI:57540"/>
        <dbReference type="ChEBI" id="CHEBI:57945"/>
        <dbReference type="ChEBI" id="CHEBI:64239"/>
        <dbReference type="ChEBI" id="CHEBI:144481"/>
        <dbReference type="EC" id="1.3.1.122"/>
    </reaction>
    <physiologicalReaction direction="right-to-left" evidence="1">
        <dbReference type="Rhea" id="RHEA:62598"/>
    </physiologicalReaction>
</comment>
<comment type="similarity">
    <text evidence="5">Belongs to the short-chain dehydrogenases/reductases (SDR) family.</text>
</comment>